<evidence type="ECO:0000255" key="1">
    <source>
        <dbReference type="HAMAP-Rule" id="MF_01335"/>
    </source>
</evidence>
<name>UCRI_PROM4</name>
<feature type="chain" id="PRO_1000142569" description="Cytochrome b6-f complex iron-sulfur subunit">
    <location>
        <begin position="1"/>
        <end position="178"/>
    </location>
</feature>
<feature type="transmembrane region" description="Helical" evidence="1">
    <location>
        <begin position="20"/>
        <end position="42"/>
    </location>
</feature>
<feature type="domain" description="Rieske" evidence="1">
    <location>
        <begin position="71"/>
        <end position="161"/>
    </location>
</feature>
<feature type="binding site" evidence="1">
    <location>
        <position position="107"/>
    </location>
    <ligand>
        <name>[2Fe-2S] cluster</name>
        <dbReference type="ChEBI" id="CHEBI:190135"/>
    </ligand>
</feature>
<feature type="binding site" evidence="1">
    <location>
        <position position="109"/>
    </location>
    <ligand>
        <name>[2Fe-2S] cluster</name>
        <dbReference type="ChEBI" id="CHEBI:190135"/>
    </ligand>
</feature>
<feature type="binding site" evidence="1">
    <location>
        <position position="125"/>
    </location>
    <ligand>
        <name>[2Fe-2S] cluster</name>
        <dbReference type="ChEBI" id="CHEBI:190135"/>
    </ligand>
</feature>
<feature type="binding site" evidence="1">
    <location>
        <position position="128"/>
    </location>
    <ligand>
        <name>[2Fe-2S] cluster</name>
        <dbReference type="ChEBI" id="CHEBI:190135"/>
    </ligand>
</feature>
<feature type="disulfide bond" evidence="1">
    <location>
        <begin position="112"/>
        <end position="127"/>
    </location>
</feature>
<comment type="function">
    <text evidence="1">Component of the cytochrome b6-f complex, which mediates electron transfer between photosystem II (PSII) and photosystem I (PSI), cyclic electron flow around PSI, and state transitions.</text>
</comment>
<comment type="catalytic activity">
    <reaction evidence="1">
        <text>2 oxidized [plastocyanin] + a plastoquinol + 2 H(+)(in) = 2 reduced [plastocyanin] + a plastoquinone + 4 H(+)(out)</text>
        <dbReference type="Rhea" id="RHEA:22148"/>
        <dbReference type="Rhea" id="RHEA-COMP:9561"/>
        <dbReference type="Rhea" id="RHEA-COMP:9562"/>
        <dbReference type="Rhea" id="RHEA-COMP:10039"/>
        <dbReference type="Rhea" id="RHEA-COMP:10040"/>
        <dbReference type="ChEBI" id="CHEBI:15378"/>
        <dbReference type="ChEBI" id="CHEBI:17757"/>
        <dbReference type="ChEBI" id="CHEBI:29036"/>
        <dbReference type="ChEBI" id="CHEBI:49552"/>
        <dbReference type="ChEBI" id="CHEBI:62192"/>
        <dbReference type="EC" id="7.1.1.6"/>
    </reaction>
</comment>
<comment type="cofactor">
    <cofactor evidence="1">
        <name>[2Fe-2S] cluster</name>
        <dbReference type="ChEBI" id="CHEBI:190135"/>
    </cofactor>
    <text evidence="1">Binds 1 [2Fe-2S] cluster per subunit.</text>
</comment>
<comment type="subunit">
    <text evidence="1">The 4 large subunits of the cytochrome b6-f complex are cytochrome b6, subunit IV (17 kDa polypeptide, PetD), cytochrome f and the Rieske protein, while the 4 small subunits are PetG, PetL, PetM and PetN. The complex functions as a dimer.</text>
</comment>
<comment type="subcellular location">
    <subcellularLocation>
        <location evidence="1">Cellular thylakoid membrane</location>
        <topology evidence="1">Single-pass membrane protein</topology>
    </subcellularLocation>
    <text evidence="1">The transmembrane helix obliquely spans the membrane in one monomer, and its extrinsic C-terminal domain is part of the other monomer.</text>
</comment>
<comment type="miscellaneous">
    <text>The Rieske iron-sulfur protein is a high potential 2Fe-2S protein.</text>
</comment>
<comment type="similarity">
    <text evidence="1">Belongs to the Rieske iron-sulfur protein family.</text>
</comment>
<protein>
    <recommendedName>
        <fullName evidence="1">Cytochrome b6-f complex iron-sulfur subunit</fullName>
        <ecNumber evidence="1">7.1.1.6</ecNumber>
    </recommendedName>
    <alternativeName>
        <fullName evidence="1">Plastohydroquinone:plastocyanin oxidoreductase iron-sulfur protein</fullName>
        <shortName evidence="1">ISP</shortName>
        <shortName evidence="1">RISP</shortName>
    </alternativeName>
    <alternativeName>
        <fullName evidence="1">Rieske iron-sulfur protein</fullName>
    </alternativeName>
</protein>
<keyword id="KW-0001">2Fe-2S</keyword>
<keyword id="KW-1015">Disulfide bond</keyword>
<keyword id="KW-0249">Electron transport</keyword>
<keyword id="KW-0408">Iron</keyword>
<keyword id="KW-0411">Iron-sulfur</keyword>
<keyword id="KW-0472">Membrane</keyword>
<keyword id="KW-0479">Metal-binding</keyword>
<keyword id="KW-1185">Reference proteome</keyword>
<keyword id="KW-0793">Thylakoid</keyword>
<keyword id="KW-1278">Translocase</keyword>
<keyword id="KW-0812">Transmembrane</keyword>
<keyword id="KW-1133">Transmembrane helix</keyword>
<keyword id="KW-0813">Transport</keyword>
<reference key="1">
    <citation type="journal article" date="2007" name="PLoS Genet.">
        <title>Patterns and implications of gene gain and loss in the evolution of Prochlorococcus.</title>
        <authorList>
            <person name="Kettler G.C."/>
            <person name="Martiny A.C."/>
            <person name="Huang K."/>
            <person name="Zucker J."/>
            <person name="Coleman M.L."/>
            <person name="Rodrigue S."/>
            <person name="Chen F."/>
            <person name="Lapidus A."/>
            <person name="Ferriera S."/>
            <person name="Johnson J."/>
            <person name="Steglich C."/>
            <person name="Church G.M."/>
            <person name="Richardson P."/>
            <person name="Chisholm S.W."/>
        </authorList>
    </citation>
    <scope>NUCLEOTIDE SEQUENCE [LARGE SCALE GENOMIC DNA]</scope>
    <source>
        <strain>MIT 9211</strain>
    </source>
</reference>
<organism>
    <name type="scientific">Prochlorococcus marinus (strain MIT 9211)</name>
    <dbReference type="NCBI Taxonomy" id="93059"/>
    <lineage>
        <taxon>Bacteria</taxon>
        <taxon>Bacillati</taxon>
        <taxon>Cyanobacteriota</taxon>
        <taxon>Cyanophyceae</taxon>
        <taxon>Synechococcales</taxon>
        <taxon>Prochlorococcaceae</taxon>
        <taxon>Prochlorococcus</taxon>
    </lineage>
</organism>
<dbReference type="EC" id="7.1.1.6" evidence="1"/>
<dbReference type="EMBL" id="CP000878">
    <property type="protein sequence ID" value="ABX08394.1"/>
    <property type="molecule type" value="Genomic_DNA"/>
</dbReference>
<dbReference type="RefSeq" id="WP_012195017.1">
    <property type="nucleotide sequence ID" value="NC_009976.1"/>
</dbReference>
<dbReference type="SMR" id="A9BE84"/>
<dbReference type="STRING" id="93059.P9211_04631"/>
<dbReference type="KEGG" id="pmj:P9211_04631"/>
<dbReference type="eggNOG" id="COG0723">
    <property type="taxonomic scope" value="Bacteria"/>
</dbReference>
<dbReference type="HOGENOM" id="CLU_055690_8_0_3"/>
<dbReference type="OrthoDB" id="9767869at2"/>
<dbReference type="Proteomes" id="UP000000788">
    <property type="component" value="Chromosome"/>
</dbReference>
<dbReference type="GO" id="GO:0031676">
    <property type="term" value="C:plasma membrane-derived thylakoid membrane"/>
    <property type="evidence" value="ECO:0007669"/>
    <property type="project" value="UniProtKB-SubCell"/>
</dbReference>
<dbReference type="GO" id="GO:0051537">
    <property type="term" value="F:2 iron, 2 sulfur cluster binding"/>
    <property type="evidence" value="ECO:0007669"/>
    <property type="project" value="UniProtKB-KW"/>
</dbReference>
<dbReference type="GO" id="GO:0045158">
    <property type="term" value="F:electron transporter, transferring electrons within cytochrome b6/f complex of photosystem II activity"/>
    <property type="evidence" value="ECO:0007669"/>
    <property type="project" value="UniProtKB-UniRule"/>
</dbReference>
<dbReference type="GO" id="GO:0046872">
    <property type="term" value="F:metal ion binding"/>
    <property type="evidence" value="ECO:0007669"/>
    <property type="project" value="UniProtKB-KW"/>
</dbReference>
<dbReference type="GO" id="GO:0004497">
    <property type="term" value="F:monooxygenase activity"/>
    <property type="evidence" value="ECO:0007669"/>
    <property type="project" value="UniProtKB-ARBA"/>
</dbReference>
<dbReference type="GO" id="GO:0016705">
    <property type="term" value="F:oxidoreductase activity, acting on paired donors, with incorporation or reduction of molecular oxygen"/>
    <property type="evidence" value="ECO:0007669"/>
    <property type="project" value="UniProtKB-ARBA"/>
</dbReference>
<dbReference type="GO" id="GO:0009496">
    <property type="term" value="F:plastoquinol--plastocyanin reductase activity"/>
    <property type="evidence" value="ECO:0007669"/>
    <property type="project" value="UniProtKB-UniRule"/>
</dbReference>
<dbReference type="GO" id="GO:0015979">
    <property type="term" value="P:photosynthesis"/>
    <property type="evidence" value="ECO:0007669"/>
    <property type="project" value="UniProtKB-UniRule"/>
</dbReference>
<dbReference type="CDD" id="cd03471">
    <property type="entry name" value="Rieske_cytochrome_b6f"/>
    <property type="match status" value="1"/>
</dbReference>
<dbReference type="FunFam" id="2.102.10.10:FF:000007">
    <property type="entry name" value="Cytochrome b6-f complex iron-sulfur subunit"/>
    <property type="match status" value="1"/>
</dbReference>
<dbReference type="Gene3D" id="2.102.10.10">
    <property type="entry name" value="Rieske [2Fe-2S] iron-sulphur domain"/>
    <property type="match status" value="1"/>
</dbReference>
<dbReference type="Gene3D" id="1.20.5.700">
    <property type="entry name" value="Single helix bin"/>
    <property type="match status" value="1"/>
</dbReference>
<dbReference type="HAMAP" id="MF_01335">
    <property type="entry name" value="Cytb6_f_Rieske"/>
    <property type="match status" value="1"/>
</dbReference>
<dbReference type="InterPro" id="IPR023960">
    <property type="entry name" value="Cyt_b6_f_Rieske"/>
</dbReference>
<dbReference type="InterPro" id="IPR017941">
    <property type="entry name" value="Rieske_2Fe-2S"/>
</dbReference>
<dbReference type="InterPro" id="IPR036922">
    <property type="entry name" value="Rieske_2Fe-2S_sf"/>
</dbReference>
<dbReference type="InterPro" id="IPR014349">
    <property type="entry name" value="Rieske_Fe-S_prot"/>
</dbReference>
<dbReference type="InterPro" id="IPR005805">
    <property type="entry name" value="Rieske_Fe-S_prot_C"/>
</dbReference>
<dbReference type="InterPro" id="IPR006311">
    <property type="entry name" value="TAT_signal"/>
</dbReference>
<dbReference type="NCBIfam" id="NF045928">
    <property type="entry name" value="Cytb6fFeSPetC"/>
    <property type="match status" value="1"/>
</dbReference>
<dbReference type="NCBIfam" id="NF010001">
    <property type="entry name" value="PRK13474.1"/>
    <property type="match status" value="1"/>
</dbReference>
<dbReference type="PANTHER" id="PTHR10134">
    <property type="entry name" value="CYTOCHROME B-C1 COMPLEX SUBUNIT RIESKE, MITOCHONDRIAL"/>
    <property type="match status" value="1"/>
</dbReference>
<dbReference type="Pfam" id="PF00355">
    <property type="entry name" value="Rieske"/>
    <property type="match status" value="1"/>
</dbReference>
<dbReference type="Pfam" id="PF25471">
    <property type="entry name" value="TM_PetC"/>
    <property type="match status" value="1"/>
</dbReference>
<dbReference type="PRINTS" id="PR00162">
    <property type="entry name" value="RIESKE"/>
</dbReference>
<dbReference type="SUPFAM" id="SSF50022">
    <property type="entry name" value="ISP domain"/>
    <property type="match status" value="1"/>
</dbReference>
<dbReference type="PROSITE" id="PS51296">
    <property type="entry name" value="RIESKE"/>
    <property type="match status" value="1"/>
</dbReference>
<dbReference type="PROSITE" id="PS51318">
    <property type="entry name" value="TAT"/>
    <property type="match status" value="1"/>
</dbReference>
<accession>A9BE84</accession>
<sequence>MTQMTPSDVPSMGRRQFMNLLTFGTATGVALGALYPVANYFMPLRAGGGGGGTSAKDELGNPITASGWLSNHPAGDRSLVQGLKGDPTYLIVEGSEAIGNFGINAICTHLGCVVPWNSGANKYICPCHGSQYDANGKVVRGPAPLSLALAHIDVEDDKVFVSQWAETDFRTGEKPWWT</sequence>
<proteinExistence type="inferred from homology"/>
<gene>
    <name evidence="1" type="primary">petC</name>
    <name type="ordered locus">P9211_04631</name>
</gene>